<evidence type="ECO:0000250" key="1"/>
<evidence type="ECO:0000255" key="2"/>
<evidence type="ECO:0000303" key="3">
    <source>
    </source>
</evidence>
<evidence type="ECO:0000305" key="4"/>
<evidence type="ECO:0000305" key="5">
    <source>
    </source>
</evidence>
<evidence type="ECO:0000312" key="6">
    <source>
        <dbReference type="EMBL" id="ABC70192.1"/>
    </source>
</evidence>
<protein>
    <recommendedName>
        <fullName evidence="3">Conotoxin Lt5.6</fullName>
    </recommendedName>
    <alternativeName>
        <fullName evidence="6">Lt5f</fullName>
    </alternativeName>
</protein>
<reference key="1">
    <citation type="journal article" date="2006" name="Genomics">
        <title>Diversity and evolution of conotoxins based on gene expression profiling of Conus litteratus.</title>
        <authorList>
            <person name="Pi C."/>
            <person name="Liu J."/>
            <person name="Peng C."/>
            <person name="Liu Y."/>
            <person name="Jiang X."/>
            <person name="Zhao Y."/>
            <person name="Tang S."/>
            <person name="Wang L."/>
            <person name="Dong M."/>
            <person name="Chen S."/>
            <person name="Xu A."/>
        </authorList>
    </citation>
    <scope>NUCLEOTIDE SEQUENCE [MRNA]</scope>
    <source>
        <tissue>Venom duct</tissue>
    </source>
</reference>
<accession>Q1A3Q8</accession>
<feature type="signal peptide" evidence="2">
    <location>
        <begin position="1"/>
        <end position="19"/>
    </location>
</feature>
<feature type="propeptide" id="PRO_0000315431" evidence="1">
    <location>
        <begin position="20"/>
        <end position="54"/>
    </location>
</feature>
<feature type="peptide" id="PRO_0000315432" description="Conotoxin Lt5.6">
    <location>
        <begin position="55"/>
        <end position="66"/>
    </location>
</feature>
<organism>
    <name type="scientific">Conus litteratus</name>
    <name type="common">Lettered cone</name>
    <dbReference type="NCBI Taxonomy" id="89445"/>
    <lineage>
        <taxon>Eukaryota</taxon>
        <taxon>Metazoa</taxon>
        <taxon>Spiralia</taxon>
        <taxon>Lophotrochozoa</taxon>
        <taxon>Mollusca</taxon>
        <taxon>Gastropoda</taxon>
        <taxon>Caenogastropoda</taxon>
        <taxon>Neogastropoda</taxon>
        <taxon>Conoidea</taxon>
        <taxon>Conidae</taxon>
        <taxon>Conus</taxon>
        <taxon>Elisaconus</taxon>
    </lineage>
</organism>
<sequence>MLCLPVFIILLLLASPAAPKSLETRIQNDLIRAGLTDADLKTEKGFLSGLLNVAGSVCCKVDTSCC</sequence>
<name>CT56_CONLT</name>
<dbReference type="EMBL" id="DQ345356">
    <property type="protein sequence ID" value="ABC70192.1"/>
    <property type="molecule type" value="mRNA"/>
</dbReference>
<dbReference type="ConoServer" id="1143">
    <property type="toxin name" value="Lt5f precursor"/>
</dbReference>
<dbReference type="GO" id="GO:0005576">
    <property type="term" value="C:extracellular region"/>
    <property type="evidence" value="ECO:0007669"/>
    <property type="project" value="UniProtKB-SubCell"/>
</dbReference>
<dbReference type="GO" id="GO:0090729">
    <property type="term" value="F:toxin activity"/>
    <property type="evidence" value="ECO:0007669"/>
    <property type="project" value="UniProtKB-KW"/>
</dbReference>
<dbReference type="InterPro" id="IPR031565">
    <property type="entry name" value="T-conotoxin"/>
</dbReference>
<dbReference type="Pfam" id="PF16981">
    <property type="entry name" value="Chi-conotoxin"/>
    <property type="match status" value="1"/>
</dbReference>
<comment type="subcellular location">
    <subcellularLocation>
        <location evidence="5">Secreted</location>
    </subcellularLocation>
</comment>
<comment type="tissue specificity">
    <text evidence="5">Expressed by the venom duct.</text>
</comment>
<comment type="domain">
    <text evidence="4">The cysteine framework is V (CC-CC).</text>
</comment>
<comment type="PTM">
    <text evidence="4">Contains 2 disulfide bonds that can be either 'C1-C3, C2-C4' or 'C1-C4, C2-C3', since these disulfide connectivities have been observed for conotoxins with cysteine framework V (for examples, see AC P0DQQ7 and AC P81755).</text>
</comment>
<comment type="similarity">
    <text evidence="4">Belongs to the conotoxin T superfamily.</text>
</comment>
<keyword id="KW-1015">Disulfide bond</keyword>
<keyword id="KW-0964">Secreted</keyword>
<keyword id="KW-0732">Signal</keyword>
<keyword id="KW-0800">Toxin</keyword>
<proteinExistence type="inferred from homology"/>